<protein>
    <recommendedName>
        <fullName evidence="1">Octanoyltransferase</fullName>
        <ecNumber evidence="1">2.3.1.181</ecNumber>
    </recommendedName>
    <alternativeName>
        <fullName evidence="1">Lipoate-protein ligase B</fullName>
    </alternativeName>
    <alternativeName>
        <fullName evidence="1">Lipoyl/octanoyl transferase</fullName>
    </alternativeName>
    <alternativeName>
        <fullName evidence="1">Octanoyl-[acyl-carrier-protein]-protein N-octanoyltransferase</fullName>
    </alternativeName>
</protein>
<gene>
    <name evidence="1" type="primary">lipB</name>
    <name type="ordered locus">cgR_2088</name>
</gene>
<organism>
    <name type="scientific">Corynebacterium glutamicum (strain R)</name>
    <dbReference type="NCBI Taxonomy" id="340322"/>
    <lineage>
        <taxon>Bacteria</taxon>
        <taxon>Bacillati</taxon>
        <taxon>Actinomycetota</taxon>
        <taxon>Actinomycetes</taxon>
        <taxon>Mycobacteriales</taxon>
        <taxon>Corynebacteriaceae</taxon>
        <taxon>Corynebacterium</taxon>
    </lineage>
</organism>
<keyword id="KW-0012">Acyltransferase</keyword>
<keyword id="KW-0963">Cytoplasm</keyword>
<keyword id="KW-0808">Transferase</keyword>
<feature type="chain" id="PRO_1000001095" description="Octanoyltransferase">
    <location>
        <begin position="1"/>
        <end position="251"/>
    </location>
</feature>
<feature type="domain" description="BPL/LPL catalytic" evidence="2">
    <location>
        <begin position="49"/>
        <end position="230"/>
    </location>
</feature>
<feature type="active site" description="Acyl-thioester intermediate" evidence="1">
    <location>
        <position position="191"/>
    </location>
</feature>
<feature type="binding site" evidence="1">
    <location>
        <begin position="87"/>
        <end position="94"/>
    </location>
    <ligand>
        <name>substrate</name>
    </ligand>
</feature>
<feature type="binding site" evidence="1">
    <location>
        <begin position="160"/>
        <end position="162"/>
    </location>
    <ligand>
        <name>substrate</name>
    </ligand>
</feature>
<feature type="binding site" evidence="1">
    <location>
        <begin position="173"/>
        <end position="175"/>
    </location>
    <ligand>
        <name>substrate</name>
    </ligand>
</feature>
<feature type="site" description="Lowers pKa of active site Cys" evidence="1">
    <location>
        <position position="157"/>
    </location>
</feature>
<dbReference type="EC" id="2.3.1.181" evidence="1"/>
<dbReference type="EMBL" id="AP009044">
    <property type="protein sequence ID" value="BAF55088.1"/>
    <property type="molecule type" value="Genomic_DNA"/>
</dbReference>
<dbReference type="RefSeq" id="WP_003856633.1">
    <property type="nucleotide sequence ID" value="NC_009342.1"/>
</dbReference>
<dbReference type="SMR" id="A4QFS2"/>
<dbReference type="GeneID" id="1020159"/>
<dbReference type="KEGG" id="cgt:cgR_2088"/>
<dbReference type="HOGENOM" id="CLU_035168_2_1_11"/>
<dbReference type="PhylomeDB" id="A4QFS2"/>
<dbReference type="UniPathway" id="UPA00538">
    <property type="reaction ID" value="UER00592"/>
</dbReference>
<dbReference type="Proteomes" id="UP000006698">
    <property type="component" value="Chromosome"/>
</dbReference>
<dbReference type="GO" id="GO:0005737">
    <property type="term" value="C:cytoplasm"/>
    <property type="evidence" value="ECO:0007669"/>
    <property type="project" value="UniProtKB-SubCell"/>
</dbReference>
<dbReference type="GO" id="GO:0033819">
    <property type="term" value="F:lipoyl(octanoyl) transferase activity"/>
    <property type="evidence" value="ECO:0007669"/>
    <property type="project" value="UniProtKB-EC"/>
</dbReference>
<dbReference type="GO" id="GO:0036211">
    <property type="term" value="P:protein modification process"/>
    <property type="evidence" value="ECO:0007669"/>
    <property type="project" value="InterPro"/>
</dbReference>
<dbReference type="CDD" id="cd16444">
    <property type="entry name" value="LipB"/>
    <property type="match status" value="1"/>
</dbReference>
<dbReference type="Gene3D" id="3.30.930.10">
    <property type="entry name" value="Bira Bifunctional Protein, Domain 2"/>
    <property type="match status" value="1"/>
</dbReference>
<dbReference type="HAMAP" id="MF_00013">
    <property type="entry name" value="LipB"/>
    <property type="match status" value="1"/>
</dbReference>
<dbReference type="InterPro" id="IPR045864">
    <property type="entry name" value="aa-tRNA-synth_II/BPL/LPL"/>
</dbReference>
<dbReference type="InterPro" id="IPR004143">
    <property type="entry name" value="BPL_LPL_catalytic"/>
</dbReference>
<dbReference type="InterPro" id="IPR000544">
    <property type="entry name" value="Octanoyltransferase"/>
</dbReference>
<dbReference type="InterPro" id="IPR020605">
    <property type="entry name" value="Octanoyltransferase_CS"/>
</dbReference>
<dbReference type="NCBIfam" id="TIGR00214">
    <property type="entry name" value="lipB"/>
    <property type="match status" value="1"/>
</dbReference>
<dbReference type="NCBIfam" id="NF010925">
    <property type="entry name" value="PRK14345.1"/>
    <property type="match status" value="1"/>
</dbReference>
<dbReference type="PANTHER" id="PTHR10993:SF7">
    <property type="entry name" value="LIPOYLTRANSFERASE 2, MITOCHONDRIAL-RELATED"/>
    <property type="match status" value="1"/>
</dbReference>
<dbReference type="PANTHER" id="PTHR10993">
    <property type="entry name" value="OCTANOYLTRANSFERASE"/>
    <property type="match status" value="1"/>
</dbReference>
<dbReference type="Pfam" id="PF21948">
    <property type="entry name" value="LplA-B_cat"/>
    <property type="match status" value="1"/>
</dbReference>
<dbReference type="PIRSF" id="PIRSF016262">
    <property type="entry name" value="LPLase"/>
    <property type="match status" value="1"/>
</dbReference>
<dbReference type="SUPFAM" id="SSF55681">
    <property type="entry name" value="Class II aaRS and biotin synthetases"/>
    <property type="match status" value="1"/>
</dbReference>
<dbReference type="PROSITE" id="PS51733">
    <property type="entry name" value="BPL_LPL_CATALYTIC"/>
    <property type="match status" value="1"/>
</dbReference>
<dbReference type="PROSITE" id="PS01313">
    <property type="entry name" value="LIPB"/>
    <property type="match status" value="1"/>
</dbReference>
<comment type="function">
    <text evidence="1">Catalyzes the transfer of endogenously produced octanoic acid from octanoyl-acyl-carrier-protein onto the lipoyl domains of lipoate-dependent enzymes. Lipoyl-ACP can also act as a substrate although octanoyl-ACP is likely to be the physiological substrate.</text>
</comment>
<comment type="catalytic activity">
    <reaction evidence="1">
        <text>octanoyl-[ACP] + L-lysyl-[protein] = N(6)-octanoyl-L-lysyl-[protein] + holo-[ACP] + H(+)</text>
        <dbReference type="Rhea" id="RHEA:17665"/>
        <dbReference type="Rhea" id="RHEA-COMP:9636"/>
        <dbReference type="Rhea" id="RHEA-COMP:9685"/>
        <dbReference type="Rhea" id="RHEA-COMP:9752"/>
        <dbReference type="Rhea" id="RHEA-COMP:9928"/>
        <dbReference type="ChEBI" id="CHEBI:15378"/>
        <dbReference type="ChEBI" id="CHEBI:29969"/>
        <dbReference type="ChEBI" id="CHEBI:64479"/>
        <dbReference type="ChEBI" id="CHEBI:78463"/>
        <dbReference type="ChEBI" id="CHEBI:78809"/>
        <dbReference type="EC" id="2.3.1.181"/>
    </reaction>
</comment>
<comment type="pathway">
    <text evidence="1">Protein modification; protein lipoylation via endogenous pathway; protein N(6)-(lipoyl)lysine from octanoyl-[acyl-carrier-protein]: step 1/2.</text>
</comment>
<comment type="subcellular location">
    <subcellularLocation>
        <location evidence="1">Cytoplasm</location>
    </subcellularLocation>
</comment>
<comment type="miscellaneous">
    <text evidence="1">In the reaction, the free carboxyl group of octanoic acid is attached via an amide linkage to the epsilon-amino group of a specific lysine residue of lipoyl domains of lipoate-dependent enzymes.</text>
</comment>
<comment type="similarity">
    <text evidence="1">Belongs to the LipB family.</text>
</comment>
<sequence length="251" mass="27323">MTAPRDPFFPADLSIRASAEPIEIQRLGLIDYQEAWDYQAELATRRANDEIPDQLLILEHPSVYTAGKRTQPEDLPTNGLPVINADRGGRITWHGPGQLVIYPIIKLADPIDVVDYVRRLEEALIQVVGDMGVAGAGRIDGRSGVWVPAHDGWVDSKVAAIGIRITRGVAMHGVAINCNNTLDFYEHIIPCGIADAGLSTLSRELKRDVSVEELVEPSIRALDDALAGRLVVSDHSFGSAPDPTKNLPKRG</sequence>
<name>LIPB_CORGB</name>
<evidence type="ECO:0000255" key="1">
    <source>
        <dbReference type="HAMAP-Rule" id="MF_00013"/>
    </source>
</evidence>
<evidence type="ECO:0000255" key="2">
    <source>
        <dbReference type="PROSITE-ProRule" id="PRU01067"/>
    </source>
</evidence>
<proteinExistence type="inferred from homology"/>
<accession>A4QFS2</accession>
<reference key="1">
    <citation type="journal article" date="2007" name="Microbiology">
        <title>Comparative analysis of the Corynebacterium glutamicum group and complete genome sequence of strain R.</title>
        <authorList>
            <person name="Yukawa H."/>
            <person name="Omumasaba C.A."/>
            <person name="Nonaka H."/>
            <person name="Kos P."/>
            <person name="Okai N."/>
            <person name="Suzuki N."/>
            <person name="Suda M."/>
            <person name="Tsuge Y."/>
            <person name="Watanabe J."/>
            <person name="Ikeda Y."/>
            <person name="Vertes A.A."/>
            <person name="Inui M."/>
        </authorList>
    </citation>
    <scope>NUCLEOTIDE SEQUENCE [LARGE SCALE GENOMIC DNA]</scope>
    <source>
        <strain>R</strain>
    </source>
</reference>